<comment type="catalytic activity">
    <reaction evidence="1">
        <text>urea + 2 H2O + H(+) = hydrogencarbonate + 2 NH4(+)</text>
        <dbReference type="Rhea" id="RHEA:20557"/>
        <dbReference type="ChEBI" id="CHEBI:15377"/>
        <dbReference type="ChEBI" id="CHEBI:15378"/>
        <dbReference type="ChEBI" id="CHEBI:16199"/>
        <dbReference type="ChEBI" id="CHEBI:17544"/>
        <dbReference type="ChEBI" id="CHEBI:28938"/>
        <dbReference type="EC" id="3.5.1.5"/>
    </reaction>
</comment>
<comment type="cofactor">
    <cofactor evidence="1">
        <name>Ni cation</name>
        <dbReference type="ChEBI" id="CHEBI:25516"/>
    </cofactor>
    <text evidence="1">Binds 2 nickel ions per subunit.</text>
</comment>
<comment type="pathway">
    <text evidence="1">Nitrogen metabolism; urea degradation; CO(2) and NH(3) from urea (urease route): step 1/1.</text>
</comment>
<comment type="subunit">
    <text evidence="1">Heterotrimer of UreA (gamma), UreB (beta) and UreC (alpha) subunits. Three heterotrimers associate to form the active enzyme.</text>
</comment>
<comment type="subcellular location">
    <subcellularLocation>
        <location evidence="1">Cytoplasm</location>
    </subcellularLocation>
</comment>
<comment type="PTM">
    <text evidence="1">Carboxylation allows a single lysine to coordinate two nickel ions.</text>
</comment>
<comment type="similarity">
    <text evidence="1">Belongs to the metallo-dependent hydrolases superfamily. Urease alpha subunit family.</text>
</comment>
<keyword id="KW-0963">Cytoplasm</keyword>
<keyword id="KW-0378">Hydrolase</keyword>
<keyword id="KW-0479">Metal-binding</keyword>
<keyword id="KW-0533">Nickel</keyword>
<keyword id="KW-1185">Reference proteome</keyword>
<name>URE1_DINSH</name>
<proteinExistence type="inferred from homology"/>
<sequence length="569" mass="60479">MPATISRAAYADMYGPTTGDKVRLADTDLIIEVERDLTTYGEEVKFGGGKVIRDGMGQSQATRAEGAVDTVITNALIVDHTGIYKADVGLRDGVIAAIGKAGNPDTQTGVDIIIGPGTEAIAGEGRILTAGGFDSHIHFICPQQIEDALHSGITTMIGGGTGPAHGSLATTCTPGAFHIGRMLQSLDAFPMNFGLAGKGNASRPGALVEMIEAGACAMKLHEDWGTTPGAIDCCLSVADDMDVQVMIHTDTLNESGFVENTIAAMKGRTIHAFHTEGAGGGHAPDIMKVVGFEHVLPSSTNPTMPYTVNTLEEHLDMLMVCHHLDKAIPEDVAFAESRIRKETIAAEDILHDMGAFSIIASDSQAMGRVGEVIIRTWQTADKMKKQRGRLAEETGDNDNFRVRRYIAKYTINPAIAHGISAHIGSIEVGKRADLCLWNPAFFGVKPEMILMGGTIVCAQMGDPNASIPTPQPVYTRPMFGAYGRSVENSAVLFVSQAGQAAGIGASLGLAKQTLAVKTCRDIGKSSMVHNSATPEVEVHPETYEVRADGELLTCEPATELPLAQRYFMF</sequence>
<gene>
    <name evidence="1" type="primary">ureC</name>
    <name type="ordered locus">Dshi_2365</name>
</gene>
<accession>A8LRS0</accession>
<reference key="1">
    <citation type="journal article" date="2010" name="ISME J.">
        <title>The complete genome sequence of the algal symbiont Dinoroseobacter shibae: a hitchhiker's guide to life in the sea.</title>
        <authorList>
            <person name="Wagner-Dobler I."/>
            <person name="Ballhausen B."/>
            <person name="Berger M."/>
            <person name="Brinkhoff T."/>
            <person name="Buchholz I."/>
            <person name="Bunk B."/>
            <person name="Cypionka H."/>
            <person name="Daniel R."/>
            <person name="Drepper T."/>
            <person name="Gerdts G."/>
            <person name="Hahnke S."/>
            <person name="Han C."/>
            <person name="Jahn D."/>
            <person name="Kalhoefer D."/>
            <person name="Kiss H."/>
            <person name="Klenk H.P."/>
            <person name="Kyrpides N."/>
            <person name="Liebl W."/>
            <person name="Liesegang H."/>
            <person name="Meincke L."/>
            <person name="Pati A."/>
            <person name="Petersen J."/>
            <person name="Piekarski T."/>
            <person name="Pommerenke C."/>
            <person name="Pradella S."/>
            <person name="Pukall R."/>
            <person name="Rabus R."/>
            <person name="Stackebrandt E."/>
            <person name="Thole S."/>
            <person name="Thompson L."/>
            <person name="Tielen P."/>
            <person name="Tomasch J."/>
            <person name="von Jan M."/>
            <person name="Wanphrut N."/>
            <person name="Wichels A."/>
            <person name="Zech H."/>
            <person name="Simon M."/>
        </authorList>
    </citation>
    <scope>NUCLEOTIDE SEQUENCE [LARGE SCALE GENOMIC DNA]</scope>
    <source>
        <strain>DSM 16493 / NCIMB 14021 / DFL 12</strain>
    </source>
</reference>
<dbReference type="EC" id="3.5.1.5" evidence="1"/>
<dbReference type="EMBL" id="CP000830">
    <property type="protein sequence ID" value="ABV94101.1"/>
    <property type="molecule type" value="Genomic_DNA"/>
</dbReference>
<dbReference type="RefSeq" id="WP_012179032.1">
    <property type="nucleotide sequence ID" value="NC_009952.1"/>
</dbReference>
<dbReference type="SMR" id="A8LRS0"/>
<dbReference type="STRING" id="398580.Dshi_2365"/>
<dbReference type="MEROPS" id="M38.982"/>
<dbReference type="KEGG" id="dsh:Dshi_2365"/>
<dbReference type="eggNOG" id="COG0804">
    <property type="taxonomic scope" value="Bacteria"/>
</dbReference>
<dbReference type="HOGENOM" id="CLU_000980_0_0_5"/>
<dbReference type="OrthoDB" id="9802793at2"/>
<dbReference type="UniPathway" id="UPA00258">
    <property type="reaction ID" value="UER00370"/>
</dbReference>
<dbReference type="Proteomes" id="UP000006833">
    <property type="component" value="Chromosome"/>
</dbReference>
<dbReference type="GO" id="GO:0005737">
    <property type="term" value="C:cytoplasm"/>
    <property type="evidence" value="ECO:0007669"/>
    <property type="project" value="UniProtKB-SubCell"/>
</dbReference>
<dbReference type="GO" id="GO:0016151">
    <property type="term" value="F:nickel cation binding"/>
    <property type="evidence" value="ECO:0007669"/>
    <property type="project" value="UniProtKB-UniRule"/>
</dbReference>
<dbReference type="GO" id="GO:0009039">
    <property type="term" value="F:urease activity"/>
    <property type="evidence" value="ECO:0007669"/>
    <property type="project" value="UniProtKB-UniRule"/>
</dbReference>
<dbReference type="GO" id="GO:0043419">
    <property type="term" value="P:urea catabolic process"/>
    <property type="evidence" value="ECO:0007669"/>
    <property type="project" value="UniProtKB-UniRule"/>
</dbReference>
<dbReference type="CDD" id="cd00375">
    <property type="entry name" value="Urease_alpha"/>
    <property type="match status" value="1"/>
</dbReference>
<dbReference type="Gene3D" id="3.20.20.140">
    <property type="entry name" value="Metal-dependent hydrolases"/>
    <property type="match status" value="1"/>
</dbReference>
<dbReference type="Gene3D" id="2.30.40.10">
    <property type="entry name" value="Urease, subunit C, domain 1"/>
    <property type="match status" value="1"/>
</dbReference>
<dbReference type="HAMAP" id="MF_01953">
    <property type="entry name" value="Urease_alpha"/>
    <property type="match status" value="1"/>
</dbReference>
<dbReference type="InterPro" id="IPR006680">
    <property type="entry name" value="Amidohydro-rel"/>
</dbReference>
<dbReference type="InterPro" id="IPR011059">
    <property type="entry name" value="Metal-dep_hydrolase_composite"/>
</dbReference>
<dbReference type="InterPro" id="IPR032466">
    <property type="entry name" value="Metal_Hydrolase"/>
</dbReference>
<dbReference type="InterPro" id="IPR011612">
    <property type="entry name" value="Urease_alpha_N_dom"/>
</dbReference>
<dbReference type="InterPro" id="IPR050112">
    <property type="entry name" value="Urease_alpha_subunit"/>
</dbReference>
<dbReference type="InterPro" id="IPR017950">
    <property type="entry name" value="Urease_AS"/>
</dbReference>
<dbReference type="InterPro" id="IPR005848">
    <property type="entry name" value="Urease_asu"/>
</dbReference>
<dbReference type="InterPro" id="IPR017951">
    <property type="entry name" value="Urease_asu_c"/>
</dbReference>
<dbReference type="InterPro" id="IPR029754">
    <property type="entry name" value="Urease_Ni-bd"/>
</dbReference>
<dbReference type="NCBIfam" id="NF009685">
    <property type="entry name" value="PRK13206.1"/>
    <property type="match status" value="1"/>
</dbReference>
<dbReference type="NCBIfam" id="NF009686">
    <property type="entry name" value="PRK13207.1"/>
    <property type="match status" value="1"/>
</dbReference>
<dbReference type="NCBIfam" id="TIGR01792">
    <property type="entry name" value="urease_alph"/>
    <property type="match status" value="1"/>
</dbReference>
<dbReference type="PANTHER" id="PTHR43440">
    <property type="entry name" value="UREASE"/>
    <property type="match status" value="1"/>
</dbReference>
<dbReference type="PANTHER" id="PTHR43440:SF1">
    <property type="entry name" value="UREASE"/>
    <property type="match status" value="1"/>
</dbReference>
<dbReference type="Pfam" id="PF01979">
    <property type="entry name" value="Amidohydro_1"/>
    <property type="match status" value="1"/>
</dbReference>
<dbReference type="Pfam" id="PF00449">
    <property type="entry name" value="Urease_alpha"/>
    <property type="match status" value="1"/>
</dbReference>
<dbReference type="PRINTS" id="PR01752">
    <property type="entry name" value="UREASE"/>
</dbReference>
<dbReference type="SUPFAM" id="SSF51338">
    <property type="entry name" value="Composite domain of metallo-dependent hydrolases"/>
    <property type="match status" value="2"/>
</dbReference>
<dbReference type="SUPFAM" id="SSF51556">
    <property type="entry name" value="Metallo-dependent hydrolases"/>
    <property type="match status" value="1"/>
</dbReference>
<dbReference type="PROSITE" id="PS01120">
    <property type="entry name" value="UREASE_1"/>
    <property type="match status" value="1"/>
</dbReference>
<dbReference type="PROSITE" id="PS00145">
    <property type="entry name" value="UREASE_2"/>
    <property type="match status" value="1"/>
</dbReference>
<dbReference type="PROSITE" id="PS51368">
    <property type="entry name" value="UREASE_3"/>
    <property type="match status" value="1"/>
</dbReference>
<organism>
    <name type="scientific">Dinoroseobacter shibae (strain DSM 16493 / NCIMB 14021 / DFL 12)</name>
    <dbReference type="NCBI Taxonomy" id="398580"/>
    <lineage>
        <taxon>Bacteria</taxon>
        <taxon>Pseudomonadati</taxon>
        <taxon>Pseudomonadota</taxon>
        <taxon>Alphaproteobacteria</taxon>
        <taxon>Rhodobacterales</taxon>
        <taxon>Roseobacteraceae</taxon>
        <taxon>Dinoroseobacter</taxon>
    </lineage>
</organism>
<protein>
    <recommendedName>
        <fullName evidence="1">Urease subunit alpha</fullName>
        <ecNumber evidence="1">3.5.1.5</ecNumber>
    </recommendedName>
    <alternativeName>
        <fullName evidence="1">Urea amidohydrolase subunit alpha</fullName>
    </alternativeName>
</protein>
<evidence type="ECO:0000255" key="1">
    <source>
        <dbReference type="HAMAP-Rule" id="MF_01953"/>
    </source>
</evidence>
<feature type="chain" id="PRO_1000088490" description="Urease subunit alpha">
    <location>
        <begin position="1"/>
        <end position="569"/>
    </location>
</feature>
<feature type="active site" description="Proton donor" evidence="1">
    <location>
        <position position="322"/>
    </location>
</feature>
<feature type="binding site" evidence="1">
    <location>
        <position position="136"/>
    </location>
    <ligand>
        <name>Ni(2+)</name>
        <dbReference type="ChEBI" id="CHEBI:49786"/>
        <label>1</label>
    </ligand>
</feature>
<feature type="binding site" evidence="1">
    <location>
        <position position="138"/>
    </location>
    <ligand>
        <name>Ni(2+)</name>
        <dbReference type="ChEBI" id="CHEBI:49786"/>
        <label>1</label>
    </ligand>
</feature>
<feature type="binding site" description="via carbamate group" evidence="1">
    <location>
        <position position="219"/>
    </location>
    <ligand>
        <name>Ni(2+)</name>
        <dbReference type="ChEBI" id="CHEBI:49786"/>
        <label>1</label>
    </ligand>
</feature>
<feature type="binding site" description="via carbamate group" evidence="1">
    <location>
        <position position="219"/>
    </location>
    <ligand>
        <name>Ni(2+)</name>
        <dbReference type="ChEBI" id="CHEBI:49786"/>
        <label>2</label>
    </ligand>
</feature>
<feature type="binding site" evidence="1">
    <location>
        <position position="221"/>
    </location>
    <ligand>
        <name>substrate</name>
    </ligand>
</feature>
<feature type="binding site" evidence="1">
    <location>
        <position position="248"/>
    </location>
    <ligand>
        <name>Ni(2+)</name>
        <dbReference type="ChEBI" id="CHEBI:49786"/>
        <label>2</label>
    </ligand>
</feature>
<feature type="binding site" evidence="1">
    <location>
        <position position="274"/>
    </location>
    <ligand>
        <name>Ni(2+)</name>
        <dbReference type="ChEBI" id="CHEBI:49786"/>
        <label>2</label>
    </ligand>
</feature>
<feature type="binding site" evidence="1">
    <location>
        <position position="362"/>
    </location>
    <ligand>
        <name>Ni(2+)</name>
        <dbReference type="ChEBI" id="CHEBI:49786"/>
        <label>1</label>
    </ligand>
</feature>
<feature type="modified residue" description="N6-carboxylysine" evidence="1">
    <location>
        <position position="219"/>
    </location>
</feature>